<comment type="catalytic activity">
    <reaction evidence="1">
        <text>(S)-4-amino-5-oxopentanoate = 5-aminolevulinate</text>
        <dbReference type="Rhea" id="RHEA:14265"/>
        <dbReference type="ChEBI" id="CHEBI:57501"/>
        <dbReference type="ChEBI" id="CHEBI:356416"/>
        <dbReference type="EC" id="5.4.3.8"/>
    </reaction>
</comment>
<comment type="cofactor">
    <cofactor evidence="1">
        <name>pyridoxal 5'-phosphate</name>
        <dbReference type="ChEBI" id="CHEBI:597326"/>
    </cofactor>
</comment>
<comment type="pathway">
    <text evidence="1">Porphyrin-containing compound metabolism; protoporphyrin-IX biosynthesis; 5-aminolevulinate from L-glutamyl-tRNA(Glu): step 2/2.</text>
</comment>
<comment type="subunit">
    <text evidence="1">Homodimer.</text>
</comment>
<comment type="subcellular location">
    <subcellularLocation>
        <location evidence="1">Cytoplasm</location>
    </subcellularLocation>
</comment>
<comment type="similarity">
    <text evidence="1">Belongs to the class-III pyridoxal-phosphate-dependent aminotransferase family. HemL subfamily.</text>
</comment>
<accession>Q72K83</accession>
<name>GSA_THET2</name>
<protein>
    <recommendedName>
        <fullName evidence="1">Glutamate-1-semialdehyde 2,1-aminomutase</fullName>
        <shortName evidence="1">GSA</shortName>
        <ecNumber evidence="1">5.4.3.8</ecNumber>
    </recommendedName>
    <alternativeName>
        <fullName evidence="1">Glutamate-1-semialdehyde aminotransferase</fullName>
        <shortName evidence="1">GSA-AT</shortName>
    </alternativeName>
</protein>
<proteinExistence type="inferred from homology"/>
<evidence type="ECO:0000255" key="1">
    <source>
        <dbReference type="HAMAP-Rule" id="MF_00375"/>
    </source>
</evidence>
<organism>
    <name type="scientific">Thermus thermophilus (strain ATCC BAA-163 / DSM 7039 / HB27)</name>
    <dbReference type="NCBI Taxonomy" id="262724"/>
    <lineage>
        <taxon>Bacteria</taxon>
        <taxon>Thermotogati</taxon>
        <taxon>Deinococcota</taxon>
        <taxon>Deinococci</taxon>
        <taxon>Thermales</taxon>
        <taxon>Thermaceae</taxon>
        <taxon>Thermus</taxon>
    </lineage>
</organism>
<keyword id="KW-0963">Cytoplasm</keyword>
<keyword id="KW-0413">Isomerase</keyword>
<keyword id="KW-0627">Porphyrin biosynthesis</keyword>
<keyword id="KW-0663">Pyridoxal phosphate</keyword>
<dbReference type="EC" id="5.4.3.8" evidence="1"/>
<dbReference type="EMBL" id="AE017221">
    <property type="protein sequence ID" value="AAS80912.1"/>
    <property type="molecule type" value="Genomic_DNA"/>
</dbReference>
<dbReference type="SMR" id="Q72K83"/>
<dbReference type="KEGG" id="tth:TT_C0564"/>
<dbReference type="eggNOG" id="COG0001">
    <property type="taxonomic scope" value="Bacteria"/>
</dbReference>
<dbReference type="HOGENOM" id="CLU_016922_1_5_0"/>
<dbReference type="UniPathway" id="UPA00251">
    <property type="reaction ID" value="UER00317"/>
</dbReference>
<dbReference type="Proteomes" id="UP000000592">
    <property type="component" value="Chromosome"/>
</dbReference>
<dbReference type="GO" id="GO:0005737">
    <property type="term" value="C:cytoplasm"/>
    <property type="evidence" value="ECO:0007669"/>
    <property type="project" value="UniProtKB-SubCell"/>
</dbReference>
<dbReference type="GO" id="GO:0042286">
    <property type="term" value="F:glutamate-1-semialdehyde 2,1-aminomutase activity"/>
    <property type="evidence" value="ECO:0007669"/>
    <property type="project" value="UniProtKB-UniRule"/>
</dbReference>
<dbReference type="GO" id="GO:0030170">
    <property type="term" value="F:pyridoxal phosphate binding"/>
    <property type="evidence" value="ECO:0007669"/>
    <property type="project" value="InterPro"/>
</dbReference>
<dbReference type="GO" id="GO:0008483">
    <property type="term" value="F:transaminase activity"/>
    <property type="evidence" value="ECO:0007669"/>
    <property type="project" value="InterPro"/>
</dbReference>
<dbReference type="GO" id="GO:0006782">
    <property type="term" value="P:protoporphyrinogen IX biosynthetic process"/>
    <property type="evidence" value="ECO:0007669"/>
    <property type="project" value="UniProtKB-UniRule"/>
</dbReference>
<dbReference type="CDD" id="cd00610">
    <property type="entry name" value="OAT_like"/>
    <property type="match status" value="1"/>
</dbReference>
<dbReference type="FunFam" id="3.40.640.10:FF:000021">
    <property type="entry name" value="Glutamate-1-semialdehyde 2,1-aminomutase"/>
    <property type="match status" value="1"/>
</dbReference>
<dbReference type="Gene3D" id="3.90.1150.10">
    <property type="entry name" value="Aspartate Aminotransferase, domain 1"/>
    <property type="match status" value="1"/>
</dbReference>
<dbReference type="Gene3D" id="3.40.640.10">
    <property type="entry name" value="Type I PLP-dependent aspartate aminotransferase-like (Major domain)"/>
    <property type="match status" value="1"/>
</dbReference>
<dbReference type="HAMAP" id="MF_00375">
    <property type="entry name" value="HemL_aminotrans_3"/>
    <property type="match status" value="1"/>
</dbReference>
<dbReference type="InterPro" id="IPR004639">
    <property type="entry name" value="4pyrrol_synth_GluAld_NH2Trfase"/>
</dbReference>
<dbReference type="InterPro" id="IPR005814">
    <property type="entry name" value="Aminotrans_3"/>
</dbReference>
<dbReference type="InterPro" id="IPR049704">
    <property type="entry name" value="Aminotrans_3_PPA_site"/>
</dbReference>
<dbReference type="InterPro" id="IPR015424">
    <property type="entry name" value="PyrdxlP-dep_Trfase"/>
</dbReference>
<dbReference type="InterPro" id="IPR015421">
    <property type="entry name" value="PyrdxlP-dep_Trfase_major"/>
</dbReference>
<dbReference type="InterPro" id="IPR015422">
    <property type="entry name" value="PyrdxlP-dep_Trfase_small"/>
</dbReference>
<dbReference type="NCBIfam" id="TIGR00713">
    <property type="entry name" value="hemL"/>
    <property type="match status" value="1"/>
</dbReference>
<dbReference type="NCBIfam" id="NF000818">
    <property type="entry name" value="PRK00062.1"/>
    <property type="match status" value="1"/>
</dbReference>
<dbReference type="PANTHER" id="PTHR43713">
    <property type="entry name" value="GLUTAMATE-1-SEMIALDEHYDE 2,1-AMINOMUTASE"/>
    <property type="match status" value="1"/>
</dbReference>
<dbReference type="PANTHER" id="PTHR43713:SF3">
    <property type="entry name" value="GLUTAMATE-1-SEMIALDEHYDE 2,1-AMINOMUTASE 1, CHLOROPLASTIC-RELATED"/>
    <property type="match status" value="1"/>
</dbReference>
<dbReference type="Pfam" id="PF00202">
    <property type="entry name" value="Aminotran_3"/>
    <property type="match status" value="1"/>
</dbReference>
<dbReference type="SUPFAM" id="SSF53383">
    <property type="entry name" value="PLP-dependent transferases"/>
    <property type="match status" value="1"/>
</dbReference>
<dbReference type="PROSITE" id="PS00600">
    <property type="entry name" value="AA_TRANSFER_CLASS_3"/>
    <property type="match status" value="1"/>
</dbReference>
<reference key="1">
    <citation type="journal article" date="2004" name="Nat. Biotechnol.">
        <title>The genome sequence of the extreme thermophile Thermus thermophilus.</title>
        <authorList>
            <person name="Henne A."/>
            <person name="Brueggemann H."/>
            <person name="Raasch C."/>
            <person name="Wiezer A."/>
            <person name="Hartsch T."/>
            <person name="Liesegang H."/>
            <person name="Johann A."/>
            <person name="Lienard T."/>
            <person name="Gohl O."/>
            <person name="Martinez-Arias R."/>
            <person name="Jacobi C."/>
            <person name="Starkuviene V."/>
            <person name="Schlenczeck S."/>
            <person name="Dencker S."/>
            <person name="Huber R."/>
            <person name="Klenk H.-P."/>
            <person name="Kramer W."/>
            <person name="Merkl R."/>
            <person name="Gottschalk G."/>
            <person name="Fritz H.-J."/>
        </authorList>
    </citation>
    <scope>NUCLEOTIDE SEQUENCE [LARGE SCALE GENOMIC DNA]</scope>
    <source>
        <strain>ATCC BAA-163 / DSM 7039 / HB27</strain>
    </source>
</reference>
<feature type="chain" id="PRO_0000243635" description="Glutamate-1-semialdehyde 2,1-aminomutase">
    <location>
        <begin position="1"/>
        <end position="427"/>
    </location>
</feature>
<feature type="modified residue" description="N6-(pyridoxal phosphate)lysine" evidence="1">
    <location>
        <position position="269"/>
    </location>
</feature>
<gene>
    <name evidence="1" type="primary">hemL</name>
    <name type="ordered locus">TT_C0564</name>
</gene>
<sequence>MEGMERPISEAYFQEAKRHIPGGVSSPVRAFKAVGGTPPFLVRGEGAYVWDADGNRYLDYVMSWGPLILGHAHPKVLARVRETLERGLTFGAPSPLEVALAKKVKRAYPFVDLVRFVNSGTEATMSALRLARGYTNRPYIVKFRGNYHGHADGLLVEAGSGALTLGVPSSAGVPEEYAKLTLVLEYNDPEGLREVLRRRGEEIAAIIFEPVVGNAGVLVPTEDFLKALHEAREFGVLLIADEVMTGFRLAFGGATELLGLKPDLVTLGKVLGGGLPAAAYAGRREIMEKVAPLGPVYQAGTLSGNPLAMAAGLATLELLEENPGYYRYLEDLGARLERGLKEVLAQKGIPHAVNRVGSMVTVFFTEGPVVTFQDAKRTDTELFKRFFHGLLDRGIYWPPSNFEAAFLSVAHTEEDVEKTLEALGEAL</sequence>